<feature type="chain" id="PRO_0000228702" description="Probable phosphatase YcdX">
    <location>
        <begin position="1"/>
        <end position="245"/>
    </location>
</feature>
<feature type="binding site" evidence="1">
    <location>
        <position position="7"/>
    </location>
    <ligand>
        <name>Zn(2+)</name>
        <dbReference type="ChEBI" id="CHEBI:29105"/>
        <label>1</label>
    </ligand>
</feature>
<feature type="binding site" evidence="1">
    <location>
        <position position="9"/>
    </location>
    <ligand>
        <name>Zn(2+)</name>
        <dbReference type="ChEBI" id="CHEBI:29105"/>
        <label>1</label>
    </ligand>
</feature>
<feature type="binding site" evidence="1">
    <location>
        <position position="15"/>
    </location>
    <ligand>
        <name>Zn(2+)</name>
        <dbReference type="ChEBI" id="CHEBI:29105"/>
        <label>2</label>
    </ligand>
</feature>
<feature type="binding site" evidence="1">
    <location>
        <position position="40"/>
    </location>
    <ligand>
        <name>Zn(2+)</name>
        <dbReference type="ChEBI" id="CHEBI:29105"/>
        <label>2</label>
    </ligand>
</feature>
<feature type="binding site" evidence="1">
    <location>
        <position position="73"/>
    </location>
    <ligand>
        <name>Zn(2+)</name>
        <dbReference type="ChEBI" id="CHEBI:29105"/>
        <label>1</label>
    </ligand>
</feature>
<feature type="binding site" evidence="1">
    <location>
        <position position="73"/>
    </location>
    <ligand>
        <name>Zn(2+)</name>
        <dbReference type="ChEBI" id="CHEBI:29105"/>
        <label>3</label>
    </ligand>
</feature>
<feature type="binding site" evidence="1">
    <location>
        <position position="101"/>
    </location>
    <ligand>
        <name>Zn(2+)</name>
        <dbReference type="ChEBI" id="CHEBI:29105"/>
        <label>3</label>
    </ligand>
</feature>
<feature type="binding site" evidence="1">
    <location>
        <position position="131"/>
    </location>
    <ligand>
        <name>Zn(2+)</name>
        <dbReference type="ChEBI" id="CHEBI:29105"/>
        <label>3</label>
    </ligand>
</feature>
<feature type="binding site" evidence="1">
    <location>
        <position position="192"/>
    </location>
    <ligand>
        <name>Zn(2+)</name>
        <dbReference type="ChEBI" id="CHEBI:29105"/>
        <label>1</label>
    </ligand>
</feature>
<feature type="binding site" evidence="1">
    <location>
        <position position="194"/>
    </location>
    <ligand>
        <name>Zn(2+)</name>
        <dbReference type="ChEBI" id="CHEBI:29105"/>
        <label>2</label>
    </ligand>
</feature>
<sequence length="245" mass="26818">MYPVDLHMHTVASTHAYSTLSDYIAQAKQKGIKLFAITDHGPDMEDAPHHWHFINMRIWPRVVDGVGILRGIEANIKNVDGEIDCSGKMFDSLDLIIAGFHEPVFAPHDKATNTQAMIATIASGNVHIISHPGNPKYEIDVKAVAEAAAKHQVALEINNSSFLHSRKGSEDNCRAVAAAVRDAGGWVALGSDSHTAFSMGEFEECLKILDAVDFPPERILNVSPRRLLNFLESRGMAPIAEFADL</sequence>
<reference key="1">
    <citation type="journal article" date="2005" name="Nucleic Acids Res.">
        <title>Genome dynamics and diversity of Shigella species, the etiologic agents of bacillary dysentery.</title>
        <authorList>
            <person name="Yang F."/>
            <person name="Yang J."/>
            <person name="Zhang X."/>
            <person name="Chen L."/>
            <person name="Jiang Y."/>
            <person name="Yan Y."/>
            <person name="Tang X."/>
            <person name="Wang J."/>
            <person name="Xiong Z."/>
            <person name="Dong J."/>
            <person name="Xue Y."/>
            <person name="Zhu Y."/>
            <person name="Xu X."/>
            <person name="Sun L."/>
            <person name="Chen S."/>
            <person name="Nie H."/>
            <person name="Peng J."/>
            <person name="Xu J."/>
            <person name="Wang Y."/>
            <person name="Yuan Z."/>
            <person name="Wen Y."/>
            <person name="Yao Z."/>
            <person name="Shen Y."/>
            <person name="Qiang B."/>
            <person name="Hou Y."/>
            <person name="Yu J."/>
            <person name="Jin Q."/>
        </authorList>
    </citation>
    <scope>NUCLEOTIDE SEQUENCE [LARGE SCALE GENOMIC DNA]</scope>
    <source>
        <strain>Sd197</strain>
    </source>
</reference>
<dbReference type="EC" id="3.1.3.-" evidence="1"/>
<dbReference type="EMBL" id="CP000034">
    <property type="protein sequence ID" value="ABB61169.1"/>
    <property type="molecule type" value="Genomic_DNA"/>
</dbReference>
<dbReference type="RefSeq" id="WP_000283663.1">
    <property type="nucleotide sequence ID" value="NC_007606.1"/>
</dbReference>
<dbReference type="RefSeq" id="YP_402660.1">
    <property type="nucleotide sequence ID" value="NC_007606.1"/>
</dbReference>
<dbReference type="SMR" id="Q32HN6"/>
<dbReference type="STRING" id="300267.SDY_1003"/>
<dbReference type="EnsemblBacteria" id="ABB61169">
    <property type="protein sequence ID" value="ABB61169"/>
    <property type="gene ID" value="SDY_1003"/>
</dbReference>
<dbReference type="KEGG" id="sdy:SDY_1003"/>
<dbReference type="PATRIC" id="fig|300267.13.peg.1172"/>
<dbReference type="HOGENOM" id="CLU_061999_0_1_6"/>
<dbReference type="Proteomes" id="UP000002716">
    <property type="component" value="Chromosome"/>
</dbReference>
<dbReference type="GO" id="GO:0005829">
    <property type="term" value="C:cytosol"/>
    <property type="evidence" value="ECO:0007669"/>
    <property type="project" value="TreeGrafter"/>
</dbReference>
<dbReference type="GO" id="GO:0016791">
    <property type="term" value="F:phosphatase activity"/>
    <property type="evidence" value="ECO:0007669"/>
    <property type="project" value="UniProtKB-UniRule"/>
</dbReference>
<dbReference type="GO" id="GO:0008270">
    <property type="term" value="F:zinc ion binding"/>
    <property type="evidence" value="ECO:0007669"/>
    <property type="project" value="UniProtKB-UniRule"/>
</dbReference>
<dbReference type="GO" id="GO:0071978">
    <property type="term" value="P:bacterial-type flagellum-dependent swarming motility"/>
    <property type="evidence" value="ECO:0007669"/>
    <property type="project" value="TreeGrafter"/>
</dbReference>
<dbReference type="CDD" id="cd07437">
    <property type="entry name" value="PHP_HisPPase_Ycdx_like"/>
    <property type="match status" value="1"/>
</dbReference>
<dbReference type="FunFam" id="3.20.20.140:FF:000008">
    <property type="entry name" value="Probable phosphatase YcdX"/>
    <property type="match status" value="1"/>
</dbReference>
<dbReference type="Gene3D" id="3.20.20.140">
    <property type="entry name" value="Metal-dependent hydrolases"/>
    <property type="match status" value="1"/>
</dbReference>
<dbReference type="HAMAP" id="MF_01561">
    <property type="entry name" value="YcdX_phosphat"/>
    <property type="match status" value="1"/>
</dbReference>
<dbReference type="InterPro" id="IPR023710">
    <property type="entry name" value="Phosphatase_YcdX_put"/>
</dbReference>
<dbReference type="InterPro" id="IPR004013">
    <property type="entry name" value="PHP_dom"/>
</dbReference>
<dbReference type="InterPro" id="IPR050243">
    <property type="entry name" value="PHP_phosphatase"/>
</dbReference>
<dbReference type="InterPro" id="IPR003141">
    <property type="entry name" value="Pol/His_phosphatase_N"/>
</dbReference>
<dbReference type="InterPro" id="IPR016195">
    <property type="entry name" value="Pol/histidinol_Pase-like"/>
</dbReference>
<dbReference type="NCBIfam" id="NF006702">
    <property type="entry name" value="PRK09248.1"/>
    <property type="match status" value="1"/>
</dbReference>
<dbReference type="PANTHER" id="PTHR36928">
    <property type="entry name" value="PHOSPHATASE YCDX-RELATED"/>
    <property type="match status" value="1"/>
</dbReference>
<dbReference type="PANTHER" id="PTHR36928:SF1">
    <property type="entry name" value="PHOSPHATASE YCDX-RELATED"/>
    <property type="match status" value="1"/>
</dbReference>
<dbReference type="Pfam" id="PF02811">
    <property type="entry name" value="PHP"/>
    <property type="match status" value="1"/>
</dbReference>
<dbReference type="SMART" id="SM00481">
    <property type="entry name" value="POLIIIAc"/>
    <property type="match status" value="1"/>
</dbReference>
<dbReference type="SUPFAM" id="SSF89550">
    <property type="entry name" value="PHP domain-like"/>
    <property type="match status" value="1"/>
</dbReference>
<accession>Q32HN6</accession>
<organism>
    <name type="scientific">Shigella dysenteriae serotype 1 (strain Sd197)</name>
    <dbReference type="NCBI Taxonomy" id="300267"/>
    <lineage>
        <taxon>Bacteria</taxon>
        <taxon>Pseudomonadati</taxon>
        <taxon>Pseudomonadota</taxon>
        <taxon>Gammaproteobacteria</taxon>
        <taxon>Enterobacterales</taxon>
        <taxon>Enterobacteriaceae</taxon>
        <taxon>Shigella</taxon>
    </lineage>
</organism>
<evidence type="ECO:0000255" key="1">
    <source>
        <dbReference type="HAMAP-Rule" id="MF_01561"/>
    </source>
</evidence>
<keyword id="KW-0378">Hydrolase</keyword>
<keyword id="KW-0479">Metal-binding</keyword>
<keyword id="KW-1185">Reference proteome</keyword>
<keyword id="KW-0862">Zinc</keyword>
<proteinExistence type="inferred from homology"/>
<protein>
    <recommendedName>
        <fullName evidence="1">Probable phosphatase YcdX</fullName>
        <ecNumber evidence="1">3.1.3.-</ecNumber>
    </recommendedName>
</protein>
<name>YCDX_SHIDS</name>
<gene>
    <name evidence="1" type="primary">ycdX</name>
    <name type="ordered locus">SDY_1003</name>
</gene>
<comment type="cofactor">
    <cofactor evidence="1">
        <name>Zn(2+)</name>
        <dbReference type="ChEBI" id="CHEBI:29105"/>
    </cofactor>
    <text evidence="1">Binds 3 Zn(2+) ions per subunit.</text>
</comment>
<comment type="subunit">
    <text evidence="1">Homotrimer.</text>
</comment>
<comment type="similarity">
    <text evidence="1">Belongs to the PHP family.</text>
</comment>